<organism>
    <name type="scientific">Glaesserella parasuis serovar 5 (strain SH0165)</name>
    <name type="common">Haemophilus parasuis</name>
    <dbReference type="NCBI Taxonomy" id="557723"/>
    <lineage>
        <taxon>Bacteria</taxon>
        <taxon>Pseudomonadati</taxon>
        <taxon>Pseudomonadota</taxon>
        <taxon>Gammaproteobacteria</taxon>
        <taxon>Pasteurellales</taxon>
        <taxon>Pasteurellaceae</taxon>
        <taxon>Glaesserella</taxon>
    </lineage>
</organism>
<accession>B8F756</accession>
<feature type="chain" id="PRO_1000166008" description="Large ribosomal subunit protein uL4">
    <location>
        <begin position="1"/>
        <end position="200"/>
    </location>
</feature>
<feature type="region of interest" description="Disordered" evidence="2">
    <location>
        <begin position="43"/>
        <end position="70"/>
    </location>
</feature>
<reference key="1">
    <citation type="journal article" date="2009" name="J. Bacteriol.">
        <title>Complete genome sequence of Haemophilus parasuis SH0165.</title>
        <authorList>
            <person name="Yue M."/>
            <person name="Yang F."/>
            <person name="Yang J."/>
            <person name="Bei W."/>
            <person name="Cai X."/>
            <person name="Chen L."/>
            <person name="Dong J."/>
            <person name="Zhou R."/>
            <person name="Jin M."/>
            <person name="Jin Q."/>
            <person name="Chen H."/>
        </authorList>
    </citation>
    <scope>NUCLEOTIDE SEQUENCE [LARGE SCALE GENOMIC DNA]</scope>
    <source>
        <strain>SH0165</strain>
    </source>
</reference>
<proteinExistence type="inferred from homology"/>
<protein>
    <recommendedName>
        <fullName evidence="1">Large ribosomal subunit protein uL4</fullName>
    </recommendedName>
    <alternativeName>
        <fullName evidence="3">50S ribosomal protein L4</fullName>
    </alternativeName>
</protein>
<gene>
    <name evidence="1" type="primary">rplD</name>
    <name type="ordered locus">HAPS_1607</name>
</gene>
<sequence length="200" mass="21949">MELQVVGATALSVSETTFGREFNEALIHQVVVAYAAGARQGTRAQKTRAEVSGSGKKPWRQKGTGRARSGDIKSPIWRSGGVTFAAKPQDHSQKVNKKMYRGAIKSILSELVRQDRLVVVDKFEIDAPKTKVLVQKLKDMALTDALIITASLDENLFLAARNLYKVDVRDVQGIDPVSLIAFDKVVITVDAVKQIEEMLA</sequence>
<comment type="function">
    <text evidence="1">One of the primary rRNA binding proteins, this protein initially binds near the 5'-end of the 23S rRNA. It is important during the early stages of 50S assembly. It makes multiple contacts with different domains of the 23S rRNA in the assembled 50S subunit and ribosome.</text>
</comment>
<comment type="function">
    <text evidence="1">Forms part of the polypeptide exit tunnel.</text>
</comment>
<comment type="subunit">
    <text evidence="1">Part of the 50S ribosomal subunit.</text>
</comment>
<comment type="similarity">
    <text evidence="1">Belongs to the universal ribosomal protein uL4 family.</text>
</comment>
<name>RL4_GLAP5</name>
<evidence type="ECO:0000255" key="1">
    <source>
        <dbReference type="HAMAP-Rule" id="MF_01328"/>
    </source>
</evidence>
<evidence type="ECO:0000256" key="2">
    <source>
        <dbReference type="SAM" id="MobiDB-lite"/>
    </source>
</evidence>
<evidence type="ECO:0000305" key="3"/>
<keyword id="KW-1185">Reference proteome</keyword>
<keyword id="KW-0687">Ribonucleoprotein</keyword>
<keyword id="KW-0689">Ribosomal protein</keyword>
<keyword id="KW-0694">RNA-binding</keyword>
<keyword id="KW-0699">rRNA-binding</keyword>
<dbReference type="EMBL" id="CP001321">
    <property type="protein sequence ID" value="ACL33158.1"/>
    <property type="molecule type" value="Genomic_DNA"/>
</dbReference>
<dbReference type="RefSeq" id="WP_005711169.1">
    <property type="nucleotide sequence ID" value="NC_011852.1"/>
</dbReference>
<dbReference type="SMR" id="B8F756"/>
<dbReference type="STRING" id="557723.HAPS_1607"/>
<dbReference type="KEGG" id="hap:HAPS_1607"/>
<dbReference type="HOGENOM" id="CLU_041575_5_2_6"/>
<dbReference type="Proteomes" id="UP000006743">
    <property type="component" value="Chromosome"/>
</dbReference>
<dbReference type="GO" id="GO:1990904">
    <property type="term" value="C:ribonucleoprotein complex"/>
    <property type="evidence" value="ECO:0007669"/>
    <property type="project" value="UniProtKB-KW"/>
</dbReference>
<dbReference type="GO" id="GO:0005840">
    <property type="term" value="C:ribosome"/>
    <property type="evidence" value="ECO:0007669"/>
    <property type="project" value="UniProtKB-KW"/>
</dbReference>
<dbReference type="GO" id="GO:0019843">
    <property type="term" value="F:rRNA binding"/>
    <property type="evidence" value="ECO:0007669"/>
    <property type="project" value="UniProtKB-UniRule"/>
</dbReference>
<dbReference type="GO" id="GO:0003735">
    <property type="term" value="F:structural constituent of ribosome"/>
    <property type="evidence" value="ECO:0007669"/>
    <property type="project" value="InterPro"/>
</dbReference>
<dbReference type="GO" id="GO:0006412">
    <property type="term" value="P:translation"/>
    <property type="evidence" value="ECO:0007669"/>
    <property type="project" value="UniProtKB-UniRule"/>
</dbReference>
<dbReference type="FunFam" id="3.40.1370.10:FF:000001">
    <property type="entry name" value="50S ribosomal protein L4"/>
    <property type="match status" value="1"/>
</dbReference>
<dbReference type="Gene3D" id="3.40.1370.10">
    <property type="match status" value="1"/>
</dbReference>
<dbReference type="HAMAP" id="MF_01328_B">
    <property type="entry name" value="Ribosomal_uL4_B"/>
    <property type="match status" value="1"/>
</dbReference>
<dbReference type="InterPro" id="IPR002136">
    <property type="entry name" value="Ribosomal_uL4"/>
</dbReference>
<dbReference type="InterPro" id="IPR013005">
    <property type="entry name" value="Ribosomal_uL4-like"/>
</dbReference>
<dbReference type="InterPro" id="IPR023574">
    <property type="entry name" value="Ribosomal_uL4_dom_sf"/>
</dbReference>
<dbReference type="NCBIfam" id="TIGR03953">
    <property type="entry name" value="rplD_bact"/>
    <property type="match status" value="1"/>
</dbReference>
<dbReference type="PANTHER" id="PTHR10746">
    <property type="entry name" value="50S RIBOSOMAL PROTEIN L4"/>
    <property type="match status" value="1"/>
</dbReference>
<dbReference type="PANTHER" id="PTHR10746:SF6">
    <property type="entry name" value="LARGE RIBOSOMAL SUBUNIT PROTEIN UL4M"/>
    <property type="match status" value="1"/>
</dbReference>
<dbReference type="Pfam" id="PF00573">
    <property type="entry name" value="Ribosomal_L4"/>
    <property type="match status" value="1"/>
</dbReference>
<dbReference type="SUPFAM" id="SSF52166">
    <property type="entry name" value="Ribosomal protein L4"/>
    <property type="match status" value="1"/>
</dbReference>